<evidence type="ECO:0000255" key="1">
    <source>
        <dbReference type="HAMAP-Rule" id="MF_00087"/>
    </source>
</evidence>
<evidence type="ECO:0000305" key="2"/>
<feature type="chain" id="PRO_0000335084" description="Glutamyl-tRNA reductase">
    <location>
        <begin position="1"/>
        <end position="420"/>
    </location>
</feature>
<feature type="active site" description="Nucleophile" evidence="1">
    <location>
        <position position="50"/>
    </location>
</feature>
<feature type="binding site" evidence="1">
    <location>
        <begin position="49"/>
        <end position="52"/>
    </location>
    <ligand>
        <name>substrate</name>
    </ligand>
</feature>
<feature type="binding site" evidence="1">
    <location>
        <position position="109"/>
    </location>
    <ligand>
        <name>substrate</name>
    </ligand>
</feature>
<feature type="binding site" evidence="1">
    <location>
        <begin position="114"/>
        <end position="116"/>
    </location>
    <ligand>
        <name>substrate</name>
    </ligand>
</feature>
<feature type="binding site" evidence="1">
    <location>
        <position position="120"/>
    </location>
    <ligand>
        <name>substrate</name>
    </ligand>
</feature>
<feature type="binding site" evidence="1">
    <location>
        <begin position="189"/>
        <end position="194"/>
    </location>
    <ligand>
        <name>NADP(+)</name>
        <dbReference type="ChEBI" id="CHEBI:58349"/>
    </ligand>
</feature>
<feature type="site" description="Important for activity" evidence="1">
    <location>
        <position position="99"/>
    </location>
</feature>
<reference key="1">
    <citation type="submission" date="2007-02" db="EMBL/GenBank/DDBJ databases">
        <title>Complete sequence of chromosome of Yersinia pestis Pestoides F.</title>
        <authorList>
            <consortium name="US DOE Joint Genome Institute"/>
            <person name="Copeland A."/>
            <person name="Lucas S."/>
            <person name="Lapidus A."/>
            <person name="Barry K."/>
            <person name="Detter J.C."/>
            <person name="Glavina del Rio T."/>
            <person name="Hammon N."/>
            <person name="Israni S."/>
            <person name="Dalin E."/>
            <person name="Tice H."/>
            <person name="Pitluck S."/>
            <person name="Di Bartolo G."/>
            <person name="Chain P."/>
            <person name="Malfatti S."/>
            <person name="Shin M."/>
            <person name="Vergez L."/>
            <person name="Schmutz J."/>
            <person name="Larimer F."/>
            <person name="Land M."/>
            <person name="Hauser L."/>
            <person name="Worsham P."/>
            <person name="Chu M."/>
            <person name="Bearden S."/>
            <person name="Garcia E."/>
            <person name="Richardson P."/>
        </authorList>
    </citation>
    <scope>NUCLEOTIDE SEQUENCE [LARGE SCALE GENOMIC DNA]</scope>
    <source>
        <strain>Pestoides F</strain>
    </source>
</reference>
<name>HEM1_YERPP</name>
<sequence length="420" mass="46660">MTLLALGINHKTAPVSLRERVTFSPESMDQALNSLLQQPLVQGGVVLSTCNRTELYLSVEQQENLHEQLTAWLCNYHKLSPDDVRQSLYWHHGNDAVRHLMRVASGLDSQVLGEPQILGQVKKAFAESQRGQSLSSELERLFQKSFSVAKRVRTETEIGASAVSVAFAACSLARQIFESLSELHVLLVGAGETIELVARHLREHQVKHMIIANRTRERAQSLASEVGAEVITLPEIDARLADADIIISSTASPLPIIGKGMVERALKTRRNQPMLFIDIAVPRDIEPEVGKLSNAYLYSVDDLQAIIQHNMAQRQAAAVQAESIVQQESMNFMTWLRAQGAVETIRDYRSQAEQVRSEMTAKALVAIEQGANVEQVINELAYKLTNRLIHAPTKSLQQAASDGDMERLQLLRDSLGLDQH</sequence>
<accession>A4TJN8</accession>
<protein>
    <recommendedName>
        <fullName evidence="1">Glutamyl-tRNA reductase</fullName>
        <shortName evidence="1">GluTR</shortName>
        <ecNumber evidence="1">1.2.1.70</ecNumber>
    </recommendedName>
</protein>
<keyword id="KW-0521">NADP</keyword>
<keyword id="KW-0560">Oxidoreductase</keyword>
<keyword id="KW-0627">Porphyrin biosynthesis</keyword>
<comment type="function">
    <text evidence="1">Catalyzes the NADPH-dependent reduction of glutamyl-tRNA(Glu) to glutamate 1-semialdehyde (GSA).</text>
</comment>
<comment type="catalytic activity">
    <reaction evidence="1">
        <text>(S)-4-amino-5-oxopentanoate + tRNA(Glu) + NADP(+) = L-glutamyl-tRNA(Glu) + NADPH + H(+)</text>
        <dbReference type="Rhea" id="RHEA:12344"/>
        <dbReference type="Rhea" id="RHEA-COMP:9663"/>
        <dbReference type="Rhea" id="RHEA-COMP:9680"/>
        <dbReference type="ChEBI" id="CHEBI:15378"/>
        <dbReference type="ChEBI" id="CHEBI:57501"/>
        <dbReference type="ChEBI" id="CHEBI:57783"/>
        <dbReference type="ChEBI" id="CHEBI:58349"/>
        <dbReference type="ChEBI" id="CHEBI:78442"/>
        <dbReference type="ChEBI" id="CHEBI:78520"/>
        <dbReference type="EC" id="1.2.1.70"/>
    </reaction>
</comment>
<comment type="pathway">
    <text evidence="1">Porphyrin-containing compound metabolism; protoporphyrin-IX biosynthesis; 5-aminolevulinate from L-glutamyl-tRNA(Glu): step 1/2.</text>
</comment>
<comment type="subunit">
    <text evidence="1">Homodimer.</text>
</comment>
<comment type="domain">
    <text evidence="1">Possesses an unusual extended V-shaped dimeric structure with each monomer consisting of three distinct domains arranged along a curved 'spinal' alpha-helix. The N-terminal catalytic domain specifically recognizes the glutamate moiety of the substrate. The second domain is the NADPH-binding domain, and the third C-terminal domain is responsible for dimerization.</text>
</comment>
<comment type="miscellaneous">
    <text evidence="1">During catalysis, the active site Cys acts as a nucleophile attacking the alpha-carbonyl group of tRNA-bound glutamate with the formation of a thioester intermediate between enzyme and glutamate, and the concomitant release of tRNA(Glu). The thioester intermediate is finally reduced by direct hydride transfer from NADPH, to form the product GSA.</text>
</comment>
<comment type="similarity">
    <text evidence="1">Belongs to the glutamyl-tRNA reductase family.</text>
</comment>
<comment type="sequence caution" evidence="2">
    <conflict type="erroneous initiation">
        <sequence resource="EMBL-CDS" id="ABP39500"/>
    </conflict>
</comment>
<gene>
    <name evidence="1" type="primary">hemA</name>
    <name type="ordered locus">YPDSF_1102</name>
</gene>
<dbReference type="EC" id="1.2.1.70" evidence="1"/>
<dbReference type="EMBL" id="CP000668">
    <property type="protein sequence ID" value="ABP39500.1"/>
    <property type="status" value="ALT_INIT"/>
    <property type="molecule type" value="Genomic_DNA"/>
</dbReference>
<dbReference type="RefSeq" id="WP_002211237.1">
    <property type="nucleotide sequence ID" value="NZ_CP009715.1"/>
</dbReference>
<dbReference type="SMR" id="A4TJN8"/>
<dbReference type="GeneID" id="57976645"/>
<dbReference type="KEGG" id="ypp:YPDSF_1102"/>
<dbReference type="PATRIC" id="fig|386656.14.peg.2730"/>
<dbReference type="UniPathway" id="UPA00251">
    <property type="reaction ID" value="UER00316"/>
</dbReference>
<dbReference type="GO" id="GO:0008883">
    <property type="term" value="F:glutamyl-tRNA reductase activity"/>
    <property type="evidence" value="ECO:0007669"/>
    <property type="project" value="UniProtKB-UniRule"/>
</dbReference>
<dbReference type="GO" id="GO:0050661">
    <property type="term" value="F:NADP binding"/>
    <property type="evidence" value="ECO:0007669"/>
    <property type="project" value="InterPro"/>
</dbReference>
<dbReference type="GO" id="GO:0019353">
    <property type="term" value="P:protoporphyrinogen IX biosynthetic process from glutamate"/>
    <property type="evidence" value="ECO:0007669"/>
    <property type="project" value="TreeGrafter"/>
</dbReference>
<dbReference type="CDD" id="cd05213">
    <property type="entry name" value="NAD_bind_Glutamyl_tRNA_reduct"/>
    <property type="match status" value="1"/>
</dbReference>
<dbReference type="FunFam" id="3.30.460.30:FF:000001">
    <property type="entry name" value="Glutamyl-tRNA reductase"/>
    <property type="match status" value="1"/>
</dbReference>
<dbReference type="FunFam" id="3.40.50.720:FF:000031">
    <property type="entry name" value="Glutamyl-tRNA reductase"/>
    <property type="match status" value="1"/>
</dbReference>
<dbReference type="Gene3D" id="3.30.460.30">
    <property type="entry name" value="Glutamyl-tRNA reductase, N-terminal domain"/>
    <property type="match status" value="1"/>
</dbReference>
<dbReference type="Gene3D" id="3.40.50.720">
    <property type="entry name" value="NAD(P)-binding Rossmann-like Domain"/>
    <property type="match status" value="1"/>
</dbReference>
<dbReference type="HAMAP" id="MF_00087">
    <property type="entry name" value="Glu_tRNA_reductase"/>
    <property type="match status" value="1"/>
</dbReference>
<dbReference type="InterPro" id="IPR000343">
    <property type="entry name" value="4pyrrol_synth_GluRdtase"/>
</dbReference>
<dbReference type="InterPro" id="IPR015896">
    <property type="entry name" value="4pyrrol_synth_GluRdtase_dimer"/>
</dbReference>
<dbReference type="InterPro" id="IPR015895">
    <property type="entry name" value="4pyrrol_synth_GluRdtase_N"/>
</dbReference>
<dbReference type="InterPro" id="IPR018214">
    <property type="entry name" value="GluRdtase_CS"/>
</dbReference>
<dbReference type="InterPro" id="IPR036453">
    <property type="entry name" value="GluRdtase_dimer_dom_sf"/>
</dbReference>
<dbReference type="InterPro" id="IPR036343">
    <property type="entry name" value="GluRdtase_N_sf"/>
</dbReference>
<dbReference type="InterPro" id="IPR036291">
    <property type="entry name" value="NAD(P)-bd_dom_sf"/>
</dbReference>
<dbReference type="InterPro" id="IPR006151">
    <property type="entry name" value="Shikm_DH/Glu-tRNA_Rdtase"/>
</dbReference>
<dbReference type="NCBIfam" id="TIGR01035">
    <property type="entry name" value="hemA"/>
    <property type="match status" value="1"/>
</dbReference>
<dbReference type="PANTHER" id="PTHR43013">
    <property type="entry name" value="GLUTAMYL-TRNA REDUCTASE"/>
    <property type="match status" value="1"/>
</dbReference>
<dbReference type="PANTHER" id="PTHR43013:SF1">
    <property type="entry name" value="GLUTAMYL-TRNA REDUCTASE"/>
    <property type="match status" value="1"/>
</dbReference>
<dbReference type="Pfam" id="PF00745">
    <property type="entry name" value="GlutR_dimer"/>
    <property type="match status" value="1"/>
</dbReference>
<dbReference type="Pfam" id="PF05201">
    <property type="entry name" value="GlutR_N"/>
    <property type="match status" value="1"/>
</dbReference>
<dbReference type="Pfam" id="PF01488">
    <property type="entry name" value="Shikimate_DH"/>
    <property type="match status" value="1"/>
</dbReference>
<dbReference type="PIRSF" id="PIRSF000445">
    <property type="entry name" value="4pyrrol_synth_GluRdtase"/>
    <property type="match status" value="1"/>
</dbReference>
<dbReference type="SUPFAM" id="SSF69742">
    <property type="entry name" value="Glutamyl tRNA-reductase catalytic, N-terminal domain"/>
    <property type="match status" value="1"/>
</dbReference>
<dbReference type="SUPFAM" id="SSF69075">
    <property type="entry name" value="Glutamyl tRNA-reductase dimerization domain"/>
    <property type="match status" value="1"/>
</dbReference>
<dbReference type="SUPFAM" id="SSF51735">
    <property type="entry name" value="NAD(P)-binding Rossmann-fold domains"/>
    <property type="match status" value="1"/>
</dbReference>
<dbReference type="PROSITE" id="PS00747">
    <property type="entry name" value="GLUTR"/>
    <property type="match status" value="1"/>
</dbReference>
<organism>
    <name type="scientific">Yersinia pestis (strain Pestoides F)</name>
    <dbReference type="NCBI Taxonomy" id="386656"/>
    <lineage>
        <taxon>Bacteria</taxon>
        <taxon>Pseudomonadati</taxon>
        <taxon>Pseudomonadota</taxon>
        <taxon>Gammaproteobacteria</taxon>
        <taxon>Enterobacterales</taxon>
        <taxon>Yersiniaceae</taxon>
        <taxon>Yersinia</taxon>
    </lineage>
</organism>
<proteinExistence type="inferred from homology"/>